<sequence>MLLPWLNEELIEAGCDEAGRGCLAGAVYAAAVILPKDFENELLNDSKQLSEKQRYALREVIERDAVAWAVGIVSPEEIDKINILNASFLAMHRAVDRLKTRPQHLLIDGNRFKKYPDIPHTTVIKGDGKYLSIAAASILAKTYRDDYMNRLHQEFPCYDWEHNKGYPTKKHRAAIAGHGTTPYHRMTFNLLGDGQLELFSK</sequence>
<feature type="chain" id="PRO_0000235697" description="Ribonuclease HII">
    <location>
        <begin position="1"/>
        <end position="201"/>
    </location>
</feature>
<feature type="domain" description="RNase H type-2" evidence="2">
    <location>
        <begin position="10"/>
        <end position="200"/>
    </location>
</feature>
<feature type="binding site" evidence="1">
    <location>
        <position position="16"/>
    </location>
    <ligand>
        <name>a divalent metal cation</name>
        <dbReference type="ChEBI" id="CHEBI:60240"/>
    </ligand>
</feature>
<feature type="binding site" evidence="1">
    <location>
        <position position="17"/>
    </location>
    <ligand>
        <name>a divalent metal cation</name>
        <dbReference type="ChEBI" id="CHEBI:60240"/>
    </ligand>
</feature>
<feature type="binding site" evidence="1">
    <location>
        <position position="108"/>
    </location>
    <ligand>
        <name>a divalent metal cation</name>
        <dbReference type="ChEBI" id="CHEBI:60240"/>
    </ligand>
</feature>
<gene>
    <name evidence="1" type="primary">rnhB</name>
    <name type="ordered locus">BF0290</name>
</gene>
<evidence type="ECO:0000255" key="1">
    <source>
        <dbReference type="HAMAP-Rule" id="MF_00052"/>
    </source>
</evidence>
<evidence type="ECO:0000255" key="2">
    <source>
        <dbReference type="PROSITE-ProRule" id="PRU01319"/>
    </source>
</evidence>
<accession>Q64ZN7</accession>
<comment type="function">
    <text evidence="1">Endonuclease that specifically degrades the RNA of RNA-DNA hybrids.</text>
</comment>
<comment type="catalytic activity">
    <reaction evidence="1">
        <text>Endonucleolytic cleavage to 5'-phosphomonoester.</text>
        <dbReference type="EC" id="3.1.26.4"/>
    </reaction>
</comment>
<comment type="cofactor">
    <cofactor evidence="1">
        <name>Mn(2+)</name>
        <dbReference type="ChEBI" id="CHEBI:29035"/>
    </cofactor>
    <cofactor evidence="1">
        <name>Mg(2+)</name>
        <dbReference type="ChEBI" id="CHEBI:18420"/>
    </cofactor>
    <text evidence="1">Manganese or magnesium. Binds 1 divalent metal ion per monomer in the absence of substrate. May bind a second metal ion after substrate binding.</text>
</comment>
<comment type="subcellular location">
    <subcellularLocation>
        <location evidence="1">Cytoplasm</location>
    </subcellularLocation>
</comment>
<comment type="similarity">
    <text evidence="1">Belongs to the RNase HII family.</text>
</comment>
<protein>
    <recommendedName>
        <fullName evidence="1">Ribonuclease HII</fullName>
        <shortName evidence="1">RNase HII</shortName>
        <ecNumber evidence="1">3.1.26.4</ecNumber>
    </recommendedName>
</protein>
<reference key="1">
    <citation type="journal article" date="2004" name="Proc. Natl. Acad. Sci. U.S.A.">
        <title>Genomic analysis of Bacteroides fragilis reveals extensive DNA inversions regulating cell surface adaptation.</title>
        <authorList>
            <person name="Kuwahara T."/>
            <person name="Yamashita A."/>
            <person name="Hirakawa H."/>
            <person name="Nakayama H."/>
            <person name="Toh H."/>
            <person name="Okada N."/>
            <person name="Kuhara S."/>
            <person name="Hattori M."/>
            <person name="Hayashi T."/>
            <person name="Ohnishi Y."/>
        </authorList>
    </citation>
    <scope>NUCLEOTIDE SEQUENCE [LARGE SCALE GENOMIC DNA]</scope>
    <source>
        <strain>YCH46</strain>
    </source>
</reference>
<organism>
    <name type="scientific">Bacteroides fragilis (strain YCH46)</name>
    <dbReference type="NCBI Taxonomy" id="295405"/>
    <lineage>
        <taxon>Bacteria</taxon>
        <taxon>Pseudomonadati</taxon>
        <taxon>Bacteroidota</taxon>
        <taxon>Bacteroidia</taxon>
        <taxon>Bacteroidales</taxon>
        <taxon>Bacteroidaceae</taxon>
        <taxon>Bacteroides</taxon>
    </lineage>
</organism>
<name>RNH2_BACFR</name>
<proteinExistence type="inferred from homology"/>
<keyword id="KW-0963">Cytoplasm</keyword>
<keyword id="KW-0255">Endonuclease</keyword>
<keyword id="KW-0378">Hydrolase</keyword>
<keyword id="KW-0464">Manganese</keyword>
<keyword id="KW-0479">Metal-binding</keyword>
<keyword id="KW-0540">Nuclease</keyword>
<dbReference type="EC" id="3.1.26.4" evidence="1"/>
<dbReference type="EMBL" id="AP006841">
    <property type="protein sequence ID" value="BAD47039.1"/>
    <property type="molecule type" value="Genomic_DNA"/>
</dbReference>
<dbReference type="RefSeq" id="WP_005796757.1">
    <property type="nucleotide sequence ID" value="NZ_UYXF01000014.1"/>
</dbReference>
<dbReference type="RefSeq" id="YP_097573.1">
    <property type="nucleotide sequence ID" value="NC_006347.1"/>
</dbReference>
<dbReference type="SMR" id="Q64ZN7"/>
<dbReference type="STRING" id="295405.BF0290"/>
<dbReference type="KEGG" id="bfr:BF0290"/>
<dbReference type="PATRIC" id="fig|295405.11.peg.314"/>
<dbReference type="HOGENOM" id="CLU_036532_3_1_10"/>
<dbReference type="OrthoDB" id="9803420at2"/>
<dbReference type="Proteomes" id="UP000002197">
    <property type="component" value="Chromosome"/>
</dbReference>
<dbReference type="GO" id="GO:0005737">
    <property type="term" value="C:cytoplasm"/>
    <property type="evidence" value="ECO:0007669"/>
    <property type="project" value="UniProtKB-SubCell"/>
</dbReference>
<dbReference type="GO" id="GO:0032299">
    <property type="term" value="C:ribonuclease H2 complex"/>
    <property type="evidence" value="ECO:0007669"/>
    <property type="project" value="TreeGrafter"/>
</dbReference>
<dbReference type="GO" id="GO:0030145">
    <property type="term" value="F:manganese ion binding"/>
    <property type="evidence" value="ECO:0007669"/>
    <property type="project" value="UniProtKB-UniRule"/>
</dbReference>
<dbReference type="GO" id="GO:0003723">
    <property type="term" value="F:RNA binding"/>
    <property type="evidence" value="ECO:0007669"/>
    <property type="project" value="InterPro"/>
</dbReference>
<dbReference type="GO" id="GO:0004523">
    <property type="term" value="F:RNA-DNA hybrid ribonuclease activity"/>
    <property type="evidence" value="ECO:0007669"/>
    <property type="project" value="UniProtKB-UniRule"/>
</dbReference>
<dbReference type="GO" id="GO:0043137">
    <property type="term" value="P:DNA replication, removal of RNA primer"/>
    <property type="evidence" value="ECO:0007669"/>
    <property type="project" value="TreeGrafter"/>
</dbReference>
<dbReference type="GO" id="GO:0006298">
    <property type="term" value="P:mismatch repair"/>
    <property type="evidence" value="ECO:0007669"/>
    <property type="project" value="TreeGrafter"/>
</dbReference>
<dbReference type="CDD" id="cd07182">
    <property type="entry name" value="RNase_HII_bacteria_HII_like"/>
    <property type="match status" value="1"/>
</dbReference>
<dbReference type="FunFam" id="3.30.420.10:FF:000078">
    <property type="entry name" value="Ribonuclease HII"/>
    <property type="match status" value="1"/>
</dbReference>
<dbReference type="Gene3D" id="3.30.420.10">
    <property type="entry name" value="Ribonuclease H-like superfamily/Ribonuclease H"/>
    <property type="match status" value="1"/>
</dbReference>
<dbReference type="HAMAP" id="MF_00052_B">
    <property type="entry name" value="RNase_HII_B"/>
    <property type="match status" value="1"/>
</dbReference>
<dbReference type="InterPro" id="IPR022898">
    <property type="entry name" value="RNase_HII"/>
</dbReference>
<dbReference type="InterPro" id="IPR001352">
    <property type="entry name" value="RNase_HII/HIII"/>
</dbReference>
<dbReference type="InterPro" id="IPR024567">
    <property type="entry name" value="RNase_HII/HIII_dom"/>
</dbReference>
<dbReference type="InterPro" id="IPR012337">
    <property type="entry name" value="RNaseH-like_sf"/>
</dbReference>
<dbReference type="InterPro" id="IPR036397">
    <property type="entry name" value="RNaseH_sf"/>
</dbReference>
<dbReference type="NCBIfam" id="NF000595">
    <property type="entry name" value="PRK00015.1-3"/>
    <property type="match status" value="1"/>
</dbReference>
<dbReference type="PANTHER" id="PTHR10954">
    <property type="entry name" value="RIBONUCLEASE H2 SUBUNIT A"/>
    <property type="match status" value="1"/>
</dbReference>
<dbReference type="PANTHER" id="PTHR10954:SF18">
    <property type="entry name" value="RIBONUCLEASE HII"/>
    <property type="match status" value="1"/>
</dbReference>
<dbReference type="Pfam" id="PF01351">
    <property type="entry name" value="RNase_HII"/>
    <property type="match status" value="1"/>
</dbReference>
<dbReference type="SUPFAM" id="SSF53098">
    <property type="entry name" value="Ribonuclease H-like"/>
    <property type="match status" value="1"/>
</dbReference>
<dbReference type="PROSITE" id="PS51975">
    <property type="entry name" value="RNASE_H_2"/>
    <property type="match status" value="1"/>
</dbReference>